<gene>
    <name evidence="10" type="primary">chpG</name>
    <name evidence="11" type="synonym">chpF</name>
    <name type="ordered locus">SCO2699</name>
</gene>
<protein>
    <recommendedName>
        <fullName evidence="10">Chaplin-G</fullName>
    </recommendedName>
    <alternativeName>
        <fullName evidence="11">Chaplin-F</fullName>
    </alternativeName>
</protein>
<reference key="1">
    <citation type="journal article" date="2002" name="Nature">
        <title>Complete genome sequence of the model actinomycete Streptomyces coelicolor A3(2).</title>
        <authorList>
            <person name="Bentley S.D."/>
            <person name="Chater K.F."/>
            <person name="Cerdeno-Tarraga A.-M."/>
            <person name="Challis G.L."/>
            <person name="Thomson N.R."/>
            <person name="James K.D."/>
            <person name="Harris D.E."/>
            <person name="Quail M.A."/>
            <person name="Kieser H."/>
            <person name="Harper D."/>
            <person name="Bateman A."/>
            <person name="Brown S."/>
            <person name="Chandra G."/>
            <person name="Chen C.W."/>
            <person name="Collins M."/>
            <person name="Cronin A."/>
            <person name="Fraser A."/>
            <person name="Goble A."/>
            <person name="Hidalgo J."/>
            <person name="Hornsby T."/>
            <person name="Howarth S."/>
            <person name="Huang C.-H."/>
            <person name="Kieser T."/>
            <person name="Larke L."/>
            <person name="Murphy L.D."/>
            <person name="Oliver K."/>
            <person name="O'Neil S."/>
            <person name="Rabbinowitsch E."/>
            <person name="Rajandream M.A."/>
            <person name="Rutherford K.M."/>
            <person name="Rutter S."/>
            <person name="Seeger K."/>
            <person name="Saunders D."/>
            <person name="Sharp S."/>
            <person name="Squares R."/>
            <person name="Squares S."/>
            <person name="Taylor K."/>
            <person name="Warren T."/>
            <person name="Wietzorrek A."/>
            <person name="Woodward J.R."/>
            <person name="Barrell B.G."/>
            <person name="Parkhill J."/>
            <person name="Hopwood D.A."/>
        </authorList>
    </citation>
    <scope>NUCLEOTIDE SEQUENCE [LARGE SCALE GENOMIC DNA]</scope>
    <source>
        <strain>ATCC BAA-471 / A3(2) / M145</strain>
    </source>
</reference>
<reference key="2">
    <citation type="journal article" date="2003" name="Genes Dev.">
        <title>A novel class of secreted hydrophobic proteins is involved in aerial hyphae formation in Streptomyces coelicolor by forming amyloid-like fibrils.</title>
        <authorList>
            <person name="Claessen D."/>
            <person name="Rink R."/>
            <person name="de Jong W."/>
            <person name="Siebring J."/>
            <person name="de Vreugd P."/>
            <person name="Boersma F.G."/>
            <person name="Dijkhuizen L."/>
            <person name="Wosten H.A."/>
        </authorList>
    </citation>
    <scope>FUNCTION</scope>
    <scope>AMYLOID FORMATION</scope>
    <scope>SUBCELLULAR LOCATION</scope>
    <scope>DEVELOPMENTAL STAGE</scope>
    <scope>INDUCTION</scope>
    <scope>MASS SPECTROMETRY</scope>
    <source>
        <strain>ATCC BAA-471 / A3(2) / M145</strain>
    </source>
</reference>
<reference key="3">
    <citation type="journal article" date="2003" name="Genes Dev.">
        <title>The chaplins: a family of hydrophobic cell-surface proteins involved in aerial mycelium formation in Streptomyces coelicolor.</title>
        <authorList>
            <person name="Elliot M.A."/>
            <person name="Karoonuthaisiri N."/>
            <person name="Huang J."/>
            <person name="Bibb M.J."/>
            <person name="Cohen S.N."/>
            <person name="Kao C.M."/>
            <person name="Buttner M.J."/>
        </authorList>
    </citation>
    <scope>FUNCTION</scope>
    <scope>SUBCELLULAR LOCATION</scope>
    <scope>INDUCTION</scope>
    <scope>MASS SPECTROMETRY</scope>
    <source>
        <strain>A3(2) / M600</strain>
    </source>
</reference>
<reference key="4">
    <citation type="journal article" date="2004" name="Mol. Microbiol.">
        <title>The formation of the rodlet layer of streptomycetes is the result of the interplay between rodlins and chaplins.</title>
        <authorList>
            <person name="Claessen D."/>
            <person name="Stokroos I."/>
            <person name="Deelstra H.J."/>
            <person name="Penninga N.A."/>
            <person name="Bormann C."/>
            <person name="Salas J.A."/>
            <person name="Dijkhuizen L."/>
            <person name="Woesten H.A."/>
        </authorList>
    </citation>
    <scope>FUNCTION</scope>
    <scope>DISRUPTION PHENOTYPE</scope>
    <source>
        <strain>ATCC BAA-471 / A3(2) / M145</strain>
    </source>
</reference>
<reference key="5">
    <citation type="journal article" date="2007" name="Mol. Microbiol.">
        <title>SapB and the chaplins: connections between morphogenetic proteins in Streptomyces coelicolor.</title>
        <authorList>
            <person name="Capstick D.S."/>
            <person name="Willey J.M."/>
            <person name="Buttner M.J."/>
            <person name="Elliot M.A."/>
        </authorList>
    </citation>
    <scope>FUNCTION</scope>
    <scope>SUBCELLULAR LOCATION</scope>
    <scope>DEVELOPMENTAL STAGE</scope>
    <scope>INDUCTION</scope>
    <scope>DISRUPTION PHENOTYPE</scope>
    <source>
        <strain>A3(2) / M600</strain>
    </source>
</reference>
<reference key="6">
    <citation type="journal article" date="2009" name="Mol. Microbiol.">
        <title>Attachment of Streptomyces coelicolor is mediated by amyloidal fimbriae that are anchored to the cell surface via cellulose.</title>
        <authorList>
            <person name="de Jong W."/>
            <person name="Woesten H.A."/>
            <person name="Dijkhuizen L."/>
            <person name="Claessen D."/>
        </authorList>
    </citation>
    <scope>FUNCTION IN GROWTH SUBSTRATE ATTACHMENT</scope>
    <scope>DISRUPTION PHENOTYPE</scope>
    <source>
        <strain>ATCC BAA-471 / A3(2) / M145</strain>
    </source>
</reference>
<reference key="7">
    <citation type="journal article" date="2011" name="PLoS ONE">
        <title>The assembly of individual chaplin peptides from Streptomyces coelicolor into functional amyloid fibrils.</title>
        <authorList>
            <person name="Sawyer E.B."/>
            <person name="Claessen D."/>
            <person name="Haas M."/>
            <person name="Hurgobin B."/>
            <person name="Gras S.L."/>
        </authorList>
    </citation>
    <scope>FUNCTION</scope>
    <scope>AMYLOID FORMATION</scope>
</reference>
<reference key="8">
    <citation type="journal article" date="2013" name="J. Struct. Biol.">
        <title>Chaplins of Streptomyces coelicolor self-assemble into two distinct functional amyloids.</title>
        <authorList>
            <person name="Bokhove M."/>
            <person name="Claessen D."/>
            <person name="de Jong W."/>
            <person name="Dijkhuizen L."/>
            <person name="Boekema E.J."/>
            <person name="Oostergetel G.T."/>
        </authorList>
    </citation>
    <scope>FUNCTION</scope>
    <scope>AMYLOID FORMATION</scope>
</reference>
<reference key="9">
    <citation type="journal article" date="2014" name="Appl. Microbiol. Biotechnol.">
        <title>Surface modification using interfacial assembly of the Streptomyces chaplin proteins.</title>
        <authorList>
            <person name="Ekkers D.M."/>
            <person name="Claessen D."/>
            <person name="Galli F."/>
            <person name="Stamhuis E."/>
        </authorList>
    </citation>
    <scope>BIOTECHNOLOGY</scope>
    <source>
        <strain>ATCC BAA-471 / A3(2) / M145</strain>
    </source>
</reference>
<name>CHPG_STRCO</name>
<evidence type="ECO:0000255" key="1">
    <source>
        <dbReference type="PROSITE-ProRule" id="PRU01232"/>
    </source>
</evidence>
<evidence type="ECO:0000269" key="2">
    <source>
    </source>
</evidence>
<evidence type="ECO:0000269" key="3">
    <source>
    </source>
</evidence>
<evidence type="ECO:0000269" key="4">
    <source>
    </source>
</evidence>
<evidence type="ECO:0000269" key="5">
    <source>
    </source>
</evidence>
<evidence type="ECO:0000269" key="6">
    <source>
    </source>
</evidence>
<evidence type="ECO:0000269" key="7">
    <source>
    </source>
</evidence>
<evidence type="ECO:0000269" key="8">
    <source>
    </source>
</evidence>
<evidence type="ECO:0000269" key="9">
    <source>
    </source>
</evidence>
<evidence type="ECO:0000303" key="10">
    <source>
    </source>
</evidence>
<evidence type="ECO:0000303" key="11">
    <source>
    </source>
</evidence>
<evidence type="ECO:0000305" key="12">
    <source>
    </source>
</evidence>
<evidence type="ECO:0000305" key="13">
    <source>
    </source>
</evidence>
<evidence type="ECO:0000305" key="14">
    <source>
    </source>
</evidence>
<dbReference type="EMBL" id="AL939113">
    <property type="protein sequence ID" value="CAB92265.1"/>
    <property type="molecule type" value="Genomic_DNA"/>
</dbReference>
<dbReference type="RefSeq" id="NP_626933.1">
    <property type="nucleotide sequence ID" value="NC_003888.3"/>
</dbReference>
<dbReference type="RefSeq" id="WP_011028524.1">
    <property type="nucleotide sequence ID" value="NZ_VNID01000020.1"/>
</dbReference>
<dbReference type="STRING" id="100226.gene:17760306"/>
<dbReference type="PaxDb" id="100226-SCO2699"/>
<dbReference type="DNASU" id="1098133"/>
<dbReference type="KEGG" id="sco:SCO2699"/>
<dbReference type="PATRIC" id="fig|100226.15.peg.2754"/>
<dbReference type="eggNOG" id="ENOG50348JU">
    <property type="taxonomic scope" value="Bacteria"/>
</dbReference>
<dbReference type="HOGENOM" id="CLU_145456_3_0_11"/>
<dbReference type="InParanoid" id="Q9KYH3"/>
<dbReference type="Proteomes" id="UP000001973">
    <property type="component" value="Chromosome"/>
</dbReference>
<dbReference type="GO" id="GO:0009986">
    <property type="term" value="C:cell surface"/>
    <property type="evidence" value="ECO:0007669"/>
    <property type="project" value="UniProtKB-SubCell"/>
</dbReference>
<dbReference type="GO" id="GO:0005576">
    <property type="term" value="C:extracellular region"/>
    <property type="evidence" value="ECO:0007669"/>
    <property type="project" value="UniProtKB-KW"/>
</dbReference>
<dbReference type="GO" id="GO:0007155">
    <property type="term" value="P:cell adhesion"/>
    <property type="evidence" value="ECO:0007669"/>
    <property type="project" value="UniProtKB-KW"/>
</dbReference>
<dbReference type="InterPro" id="IPR005528">
    <property type="entry name" value="ChpA-H"/>
</dbReference>
<dbReference type="Pfam" id="PF03777">
    <property type="entry name" value="ChpA-C"/>
    <property type="match status" value="1"/>
</dbReference>
<dbReference type="PROSITE" id="PS51884">
    <property type="entry name" value="CHAPLIN"/>
    <property type="match status" value="1"/>
</dbReference>
<sequence length="90" mass="8468">MSRIAKAAGVALGTGAVVLSGTGMAMADAGAAGAAVGSPGVLSGNVVQVPVHVPVNLCGNTIDVIGLLNPAFGNACENGDDDDKSGGYGG</sequence>
<comment type="function">
    <text evidence="2 3 4 5 6 7 8">One of 8 partially redundant surface-active proteins required for efficient formation of aerial mycelium; the short chaplins assemble into a hydrophobic, amyloidal fibrillar surface layer that envelopes and protects aerial hyphae and spores, presumably anchored to the long chaplins (PubMed:12832396, PubMed:12832397, PubMed:15228525, PubMed:17462011). Chaplins have an overlapping function with the surface-active SapB peptide; chaplins are essential on minimal medium while on rich medium both chaplins and SapB are required for efficient aerial hyphae formation (PubMed:17462011). Chaplins are also involved in cell attachment to a hydrophobic surface (PubMed:19682261). Forms amyloid fibrils in vitro probably composed of stacked beta-sheets, at low extracellular concentrations individually restores the ability to form aerial hyphae to a chaplin-deficient strain (PubMed:21526199). A small chaplin extract (ChpD, ChpE, ChpF, ChpG and ChpH) self-assembles into 2 different amyloids; small fibrils at the air-water interface form an amphipathic membrane that resembles spore-surface structures involved in aerial hyphae formation, and hydrophilic fibrils in solution that resemble the fibers that attach cells to a hydrophobic surface. At the air-water interface the hydrophilic surface is in contact with water (probably equivalent to the peptidoglycan layer), while the hydrophobic face is exposed to the air, making the surface of the aerial hyphae hydrophobic (PubMed:24012833). A small chaplin extract applied to a chaplin-deficient strain restores aerial hyphae formation (PubMed:12832396, PubMed:12832397). The small chaplin extract forms an amyloid-like structure similar to that seen on the surface of cells without rodlets (rdlA-rdlB deletions), and is highly surface active, reducing surface tension from 72 to 26 mJ/m(2), which probably allows escape of hyphae from an aqueous environment into air (PubMed:12832396). ChpF and ChpG are sufficient to restore the rodlet layer and hydrophobicity to a strain deleted for the other 6 chaplin genes (PubMed:15228525).</text>
</comment>
<comment type="subcellular location">
    <subcellularLocation>
        <location evidence="2 3 14">Cell surface</location>
    </subcellularLocation>
    <subcellularLocation>
        <location evidence="2 3">Secreted</location>
        <location evidence="2 3">Cell wall</location>
    </subcellularLocation>
</comment>
<comment type="developmental stage">
    <text evidence="2 14">Present in aerial hyphae of sporulating cultures (at protein level).</text>
</comment>
<comment type="induction">
    <text evidence="3 5 12">Not expressed while still submerged, accumulates during aerial hyphae formation on minimal medium, no transcript detected during sporulation. Strongly expressed in aerial hyphae (at protein level) (Probable). During aerial hyphae formation and early sporulation on rich medium, under control of ECF sigma factor BldN (PubMed:12832397). Expression depends on bldB but not bldA, bldD or bldH (at protein level) (PubMed:17462011).</text>
</comment>
<comment type="mass spectrometry" mass="5994.0" method="MALDI" evidence="2"/>
<comment type="mass spectrometry" mass="5988.63" method="MALDI" evidence="3"/>
<comment type="disruption phenotype">
    <text evidence="4 5 6">A strain deleted of chpF and chpG makes rodlets (PubMed:15228525). Deletion of all 8 chaplin genes on minimal medium leads to severely disrupted aerial hyphae that collapse on the colony surface and are not hydrophobic. A few spore chains can still be made, but they have neither rodlets or amyloid-like fibers. rdlA and rdlB mRNA are down-regulated (PubMed:15228525, PubMed:17462011). Deletion of all 8 chaplin genes on rich medium leads to a reduced abundance of aerial hyphae without rodlets and occasional spore chains on surface hyphae. A complete chaplin-negative plus ram-negative strain (deletion of ramR or the ramC-ramS-ramA-ramB operon) leads to the complete loss of robust aerial hyphae (PubMed:17462011). Deletion of all 8 chaplin genes significantly reduces cellular attachment to a hydrophobic substrate; thin fibrils instead of fimbrae are detected. The long chaplins (ChpA, ChpB and ChpC, as seen by near wild-type attachment of the hextuple chpA-chpB-chpC-chpD-chpE-chpH knockout) are not essential but may contribute to attachment (PubMed:19682261).</text>
</comment>
<comment type="biotechnology">
    <text evidence="9">The small chaplin mixture (a cell wall extract of an rdlA-rdlB knockout) forms a stable coat on a number of surfaces (including Teflon and cotton) and emulsifies oil-water mixtures, which could be useful in medical and technical applications.</text>
</comment>
<comment type="similarity">
    <text evidence="13">Belongs to the chaplin family. Short chaplin subfamily.</text>
</comment>
<accession>Q9KYH3</accession>
<proteinExistence type="evidence at protein level"/>
<organism>
    <name type="scientific">Streptomyces coelicolor (strain ATCC BAA-471 / A3(2) / M145)</name>
    <dbReference type="NCBI Taxonomy" id="100226"/>
    <lineage>
        <taxon>Bacteria</taxon>
        <taxon>Bacillati</taxon>
        <taxon>Actinomycetota</taxon>
        <taxon>Actinomycetes</taxon>
        <taxon>Kitasatosporales</taxon>
        <taxon>Streptomycetaceae</taxon>
        <taxon>Streptomyces</taxon>
        <taxon>Streptomyces albidoflavus group</taxon>
    </lineage>
</organism>
<feature type="signal peptide" evidence="2 3">
    <location>
        <begin position="1"/>
        <end position="27"/>
    </location>
</feature>
<feature type="chain" id="PRO_5004328512" description="Chaplin-G">
    <location>
        <begin position="28"/>
        <end position="90"/>
    </location>
</feature>
<feature type="domain" description="Chaplin" evidence="1">
    <location>
        <begin position="38"/>
        <end position="78"/>
    </location>
</feature>
<feature type="disulfide bond" evidence="13">
    <location>
        <begin position="58"/>
        <end position="76"/>
    </location>
</feature>
<keyword id="KW-0034">Amyloid</keyword>
<keyword id="KW-0130">Cell adhesion</keyword>
<keyword id="KW-0134">Cell wall</keyword>
<keyword id="KW-1015">Disulfide bond</keyword>
<keyword id="KW-1185">Reference proteome</keyword>
<keyword id="KW-0964">Secreted</keyword>
<keyword id="KW-0732">Signal</keyword>